<gene>
    <name evidence="2" type="primary">rpsL</name>
    <name type="ordered locus">BT9727_0101</name>
</gene>
<name>RS12_BACHK</name>
<evidence type="ECO:0000250" key="1"/>
<evidence type="ECO:0000255" key="2">
    <source>
        <dbReference type="HAMAP-Rule" id="MF_00403"/>
    </source>
</evidence>
<evidence type="ECO:0000305" key="3"/>
<protein>
    <recommendedName>
        <fullName evidence="2">Small ribosomal subunit protein uS12</fullName>
    </recommendedName>
    <alternativeName>
        <fullName evidence="3">30S ribosomal protein S12</fullName>
    </alternativeName>
</protein>
<feature type="chain" id="PRO_0000146174" description="Small ribosomal subunit protein uS12">
    <location>
        <begin position="1"/>
        <end position="140"/>
    </location>
</feature>
<feature type="modified residue" description="3-methylthioaspartic acid" evidence="1">
    <location>
        <position position="102"/>
    </location>
</feature>
<sequence>MPTINQLVRNGRTDKVWKSKSPALNKGFNSLKKKSTDISAPQKRGVCTRVGTMTPKKPNSALRKYARVRLTNGIEVTAYIPGIGHNLQEHSVVLIRGGRVKDLPGVRYHIVRGALDTAGVDKRMQGRSKYGTKKPKAAKK</sequence>
<accession>Q6HPR3</accession>
<keyword id="KW-0488">Methylation</keyword>
<keyword id="KW-0687">Ribonucleoprotein</keyword>
<keyword id="KW-0689">Ribosomal protein</keyword>
<keyword id="KW-0694">RNA-binding</keyword>
<keyword id="KW-0699">rRNA-binding</keyword>
<keyword id="KW-0820">tRNA-binding</keyword>
<reference key="1">
    <citation type="journal article" date="2006" name="J. Bacteriol.">
        <title>Pathogenomic sequence analysis of Bacillus cereus and Bacillus thuringiensis isolates closely related to Bacillus anthracis.</title>
        <authorList>
            <person name="Han C.S."/>
            <person name="Xie G."/>
            <person name="Challacombe J.F."/>
            <person name="Altherr M.R."/>
            <person name="Bhotika S.S."/>
            <person name="Bruce D."/>
            <person name="Campbell C.S."/>
            <person name="Campbell M.L."/>
            <person name="Chen J."/>
            <person name="Chertkov O."/>
            <person name="Cleland C."/>
            <person name="Dimitrijevic M."/>
            <person name="Doggett N.A."/>
            <person name="Fawcett J.J."/>
            <person name="Glavina T."/>
            <person name="Goodwin L.A."/>
            <person name="Hill K.K."/>
            <person name="Hitchcock P."/>
            <person name="Jackson P.J."/>
            <person name="Keim P."/>
            <person name="Kewalramani A.R."/>
            <person name="Longmire J."/>
            <person name="Lucas S."/>
            <person name="Malfatti S."/>
            <person name="McMurry K."/>
            <person name="Meincke L.J."/>
            <person name="Misra M."/>
            <person name="Moseman B.L."/>
            <person name="Mundt M."/>
            <person name="Munk A.C."/>
            <person name="Okinaka R.T."/>
            <person name="Parson-Quintana B."/>
            <person name="Reilly L.P."/>
            <person name="Richardson P."/>
            <person name="Robinson D.L."/>
            <person name="Rubin E."/>
            <person name="Saunders E."/>
            <person name="Tapia R."/>
            <person name="Tesmer J.G."/>
            <person name="Thayer N."/>
            <person name="Thompson L.S."/>
            <person name="Tice H."/>
            <person name="Ticknor L.O."/>
            <person name="Wills P.L."/>
            <person name="Brettin T.S."/>
            <person name="Gilna P."/>
        </authorList>
    </citation>
    <scope>NUCLEOTIDE SEQUENCE [LARGE SCALE GENOMIC DNA]</scope>
    <source>
        <strain>97-27</strain>
    </source>
</reference>
<organism>
    <name type="scientific">Bacillus thuringiensis subsp. konkukian (strain 97-27)</name>
    <dbReference type="NCBI Taxonomy" id="281309"/>
    <lineage>
        <taxon>Bacteria</taxon>
        <taxon>Bacillati</taxon>
        <taxon>Bacillota</taxon>
        <taxon>Bacilli</taxon>
        <taxon>Bacillales</taxon>
        <taxon>Bacillaceae</taxon>
        <taxon>Bacillus</taxon>
        <taxon>Bacillus cereus group</taxon>
    </lineage>
</organism>
<proteinExistence type="inferred from homology"/>
<dbReference type="EMBL" id="AE017355">
    <property type="protein sequence ID" value="AAT58918.1"/>
    <property type="molecule type" value="Genomic_DNA"/>
</dbReference>
<dbReference type="RefSeq" id="WP_001142340.1">
    <property type="nucleotide sequence ID" value="NC_005957.1"/>
</dbReference>
<dbReference type="RefSeq" id="YP_034457.1">
    <property type="nucleotide sequence ID" value="NC_005957.1"/>
</dbReference>
<dbReference type="SMR" id="Q6HPR3"/>
<dbReference type="GeneID" id="93010948"/>
<dbReference type="KEGG" id="btk:BT9727_0101"/>
<dbReference type="PATRIC" id="fig|281309.8.peg.102"/>
<dbReference type="HOGENOM" id="CLU_104295_1_2_9"/>
<dbReference type="Proteomes" id="UP000001301">
    <property type="component" value="Chromosome"/>
</dbReference>
<dbReference type="GO" id="GO:0015935">
    <property type="term" value="C:small ribosomal subunit"/>
    <property type="evidence" value="ECO:0007669"/>
    <property type="project" value="InterPro"/>
</dbReference>
<dbReference type="GO" id="GO:0019843">
    <property type="term" value="F:rRNA binding"/>
    <property type="evidence" value="ECO:0007669"/>
    <property type="project" value="UniProtKB-UniRule"/>
</dbReference>
<dbReference type="GO" id="GO:0003735">
    <property type="term" value="F:structural constituent of ribosome"/>
    <property type="evidence" value="ECO:0007669"/>
    <property type="project" value="InterPro"/>
</dbReference>
<dbReference type="GO" id="GO:0000049">
    <property type="term" value="F:tRNA binding"/>
    <property type="evidence" value="ECO:0007669"/>
    <property type="project" value="UniProtKB-UniRule"/>
</dbReference>
<dbReference type="GO" id="GO:0006412">
    <property type="term" value="P:translation"/>
    <property type="evidence" value="ECO:0007669"/>
    <property type="project" value="UniProtKB-UniRule"/>
</dbReference>
<dbReference type="CDD" id="cd03368">
    <property type="entry name" value="Ribosomal_S12"/>
    <property type="match status" value="1"/>
</dbReference>
<dbReference type="FunFam" id="2.40.50.140:FF:000001">
    <property type="entry name" value="30S ribosomal protein S12"/>
    <property type="match status" value="1"/>
</dbReference>
<dbReference type="Gene3D" id="2.40.50.140">
    <property type="entry name" value="Nucleic acid-binding proteins"/>
    <property type="match status" value="1"/>
</dbReference>
<dbReference type="HAMAP" id="MF_00403_B">
    <property type="entry name" value="Ribosomal_uS12_B"/>
    <property type="match status" value="1"/>
</dbReference>
<dbReference type="InterPro" id="IPR012340">
    <property type="entry name" value="NA-bd_OB-fold"/>
</dbReference>
<dbReference type="InterPro" id="IPR006032">
    <property type="entry name" value="Ribosomal_uS12"/>
</dbReference>
<dbReference type="InterPro" id="IPR005679">
    <property type="entry name" value="Ribosomal_uS12_bac"/>
</dbReference>
<dbReference type="NCBIfam" id="TIGR00981">
    <property type="entry name" value="rpsL_bact"/>
    <property type="match status" value="1"/>
</dbReference>
<dbReference type="PANTHER" id="PTHR11652">
    <property type="entry name" value="30S RIBOSOMAL PROTEIN S12 FAMILY MEMBER"/>
    <property type="match status" value="1"/>
</dbReference>
<dbReference type="Pfam" id="PF00164">
    <property type="entry name" value="Ribosom_S12_S23"/>
    <property type="match status" value="1"/>
</dbReference>
<dbReference type="PRINTS" id="PR01034">
    <property type="entry name" value="RIBOSOMALS12"/>
</dbReference>
<dbReference type="SUPFAM" id="SSF50249">
    <property type="entry name" value="Nucleic acid-binding proteins"/>
    <property type="match status" value="1"/>
</dbReference>
<dbReference type="PROSITE" id="PS00055">
    <property type="entry name" value="RIBOSOMAL_S12"/>
    <property type="match status" value="1"/>
</dbReference>
<comment type="function">
    <text evidence="2">With S4 and S5 plays an important role in translational accuracy.</text>
</comment>
<comment type="function">
    <text evidence="2">Interacts with and stabilizes bases of the 16S rRNA that are involved in tRNA selection in the A site and with the mRNA backbone. Located at the interface of the 30S and 50S subunits, it traverses the body of the 30S subunit contacting proteins on the other side and probably holding the rRNA structure together. The combined cluster of proteins S8, S12 and S17 appears to hold together the shoulder and platform of the 30S subunit.</text>
</comment>
<comment type="subunit">
    <text evidence="2">Part of the 30S ribosomal subunit. Contacts proteins S8 and S17. May interact with IF1 in the 30S initiation complex.</text>
</comment>
<comment type="similarity">
    <text evidence="2">Belongs to the universal ribosomal protein uS12 family.</text>
</comment>